<name>SEM4D_MOUSE</name>
<proteinExistence type="evidence at protein level"/>
<keyword id="KW-1003">Cell membrane</keyword>
<keyword id="KW-0217">Developmental protein</keyword>
<keyword id="KW-0221">Differentiation</keyword>
<keyword id="KW-1015">Disulfide bond</keyword>
<keyword id="KW-0325">Glycoprotein</keyword>
<keyword id="KW-0393">Immunoglobulin domain</keyword>
<keyword id="KW-0472">Membrane</keyword>
<keyword id="KW-0524">Neurogenesis</keyword>
<keyword id="KW-0597">Phosphoprotein</keyword>
<keyword id="KW-1185">Reference proteome</keyword>
<keyword id="KW-0732">Signal</keyword>
<keyword id="KW-0812">Transmembrane</keyword>
<keyword id="KW-1133">Transmembrane helix</keyword>
<dbReference type="EMBL" id="U69535">
    <property type="protein sequence ID" value="AAC52964.1"/>
    <property type="molecule type" value="mRNA"/>
</dbReference>
<dbReference type="EMBL" id="CH466546">
    <property type="protein sequence ID" value="EDL41105.1"/>
    <property type="molecule type" value="Genomic_DNA"/>
</dbReference>
<dbReference type="EMBL" id="CH466546">
    <property type="protein sequence ID" value="EDL41106.1"/>
    <property type="molecule type" value="Genomic_DNA"/>
</dbReference>
<dbReference type="EMBL" id="CH466546">
    <property type="protein sequence ID" value="EDL41107.1"/>
    <property type="molecule type" value="Genomic_DNA"/>
</dbReference>
<dbReference type="EMBL" id="BC049780">
    <property type="protein sequence ID" value="AAH49780.2"/>
    <property type="molecule type" value="mRNA"/>
</dbReference>
<dbReference type="CCDS" id="CCDS26514.1"/>
<dbReference type="RefSeq" id="NP_001268809.1">
    <property type="nucleotide sequence ID" value="NM_001281880.2"/>
</dbReference>
<dbReference type="RefSeq" id="NP_001365242.1">
    <property type="nucleotide sequence ID" value="NM_001378313.1"/>
</dbReference>
<dbReference type="RefSeq" id="NP_001365243.1">
    <property type="nucleotide sequence ID" value="NM_001378314.1"/>
</dbReference>
<dbReference type="RefSeq" id="NP_001365244.1">
    <property type="nucleotide sequence ID" value="NM_001378315.1"/>
</dbReference>
<dbReference type="RefSeq" id="NP_001365245.1">
    <property type="nucleotide sequence ID" value="NM_001378316.1"/>
</dbReference>
<dbReference type="RefSeq" id="NP_038688.2">
    <property type="nucleotide sequence ID" value="NM_013660.4"/>
</dbReference>
<dbReference type="SMR" id="O09126"/>
<dbReference type="BioGRID" id="203169">
    <property type="interactions" value="6"/>
</dbReference>
<dbReference type="FunCoup" id="O09126">
    <property type="interactions" value="554"/>
</dbReference>
<dbReference type="IntAct" id="O09126">
    <property type="interactions" value="1"/>
</dbReference>
<dbReference type="STRING" id="10090.ENSMUSP00000021900"/>
<dbReference type="GlyConnect" id="2698">
    <property type="glycosylation" value="7 N-Linked glycans (4 sites)"/>
</dbReference>
<dbReference type="GlyCosmos" id="O09126">
    <property type="glycosylation" value="8 sites, 7 glycans"/>
</dbReference>
<dbReference type="GlyGen" id="O09126">
    <property type="glycosylation" value="12 sites, 14 N-linked glycans (8 sites), 1 O-linked glycan (1 site)"/>
</dbReference>
<dbReference type="iPTMnet" id="O09126"/>
<dbReference type="PhosphoSitePlus" id="O09126"/>
<dbReference type="SwissPalm" id="O09126"/>
<dbReference type="jPOST" id="O09126"/>
<dbReference type="PaxDb" id="10090-ENSMUSP00000021900"/>
<dbReference type="PeptideAtlas" id="O09126"/>
<dbReference type="ProteomicsDB" id="256617"/>
<dbReference type="ABCD" id="O09126">
    <property type="antibodies" value="20 sequenced antibodies"/>
</dbReference>
<dbReference type="Antibodypedia" id="3064">
    <property type="antibodies" value="973 antibodies from 41 providers"/>
</dbReference>
<dbReference type="DNASU" id="20354"/>
<dbReference type="Ensembl" id="ENSMUST00000021900.14">
    <property type="protein sequence ID" value="ENSMUSP00000021900.8"/>
    <property type="gene ID" value="ENSMUSG00000021451.17"/>
</dbReference>
<dbReference type="Ensembl" id="ENSMUST00000110039.2">
    <property type="protein sequence ID" value="ENSMUSP00000105666.2"/>
    <property type="gene ID" value="ENSMUSG00000021451.17"/>
</dbReference>
<dbReference type="Ensembl" id="ENSMUST00000110040.9">
    <property type="protein sequence ID" value="ENSMUSP00000105667.3"/>
    <property type="gene ID" value="ENSMUSG00000021451.17"/>
</dbReference>
<dbReference type="GeneID" id="20354"/>
<dbReference type="KEGG" id="mmu:20354"/>
<dbReference type="UCSC" id="uc007qmn.2">
    <property type="organism name" value="mouse"/>
</dbReference>
<dbReference type="AGR" id="MGI:109244"/>
<dbReference type="CTD" id="10507"/>
<dbReference type="MGI" id="MGI:109244">
    <property type="gene designation" value="Sema4d"/>
</dbReference>
<dbReference type="VEuPathDB" id="HostDB:ENSMUSG00000021451"/>
<dbReference type="eggNOG" id="KOG3611">
    <property type="taxonomic scope" value="Eukaryota"/>
</dbReference>
<dbReference type="GeneTree" id="ENSGT00940000159594"/>
<dbReference type="HOGENOM" id="CLU_009051_4_0_1"/>
<dbReference type="InParanoid" id="O09126"/>
<dbReference type="OMA" id="PSRGWIQ"/>
<dbReference type="OrthoDB" id="9988752at2759"/>
<dbReference type="PhylomeDB" id="O09126"/>
<dbReference type="TreeFam" id="TF316102"/>
<dbReference type="Reactome" id="R-MMU-416550">
    <property type="pathway name" value="Sema4D mediated inhibition of cell attachment and migration"/>
</dbReference>
<dbReference type="Reactome" id="R-MMU-416572">
    <property type="pathway name" value="Sema4D induced cell migration and growth-cone collapse"/>
</dbReference>
<dbReference type="Reactome" id="R-MMU-416700">
    <property type="pathway name" value="Other semaphorin interactions"/>
</dbReference>
<dbReference type="BioGRID-ORCS" id="20354">
    <property type="hits" value="1 hit in 78 CRISPR screens"/>
</dbReference>
<dbReference type="ChiTaRS" id="Sema4d">
    <property type="organism name" value="mouse"/>
</dbReference>
<dbReference type="PRO" id="PR:O09126"/>
<dbReference type="Proteomes" id="UP000000589">
    <property type="component" value="Chromosome 13"/>
</dbReference>
<dbReference type="RNAct" id="O09126">
    <property type="molecule type" value="protein"/>
</dbReference>
<dbReference type="Bgee" id="ENSMUSG00000021451">
    <property type="expression patterns" value="Expressed in granulocyte and 247 other cell types or tissues"/>
</dbReference>
<dbReference type="ExpressionAtlas" id="O09126">
    <property type="expression patterns" value="baseline and differential"/>
</dbReference>
<dbReference type="GO" id="GO:0005813">
    <property type="term" value="C:centrosome"/>
    <property type="evidence" value="ECO:0007669"/>
    <property type="project" value="Ensembl"/>
</dbReference>
<dbReference type="GO" id="GO:0036064">
    <property type="term" value="C:ciliary basal body"/>
    <property type="evidence" value="ECO:0007669"/>
    <property type="project" value="Ensembl"/>
</dbReference>
<dbReference type="GO" id="GO:0005615">
    <property type="term" value="C:extracellular space"/>
    <property type="evidence" value="ECO:0000314"/>
    <property type="project" value="BHF-UCL"/>
</dbReference>
<dbReference type="GO" id="GO:0098982">
    <property type="term" value="C:GABA-ergic synapse"/>
    <property type="evidence" value="ECO:0000314"/>
    <property type="project" value="SynGO"/>
</dbReference>
<dbReference type="GO" id="GO:0016020">
    <property type="term" value="C:membrane"/>
    <property type="evidence" value="ECO:0000304"/>
    <property type="project" value="BHF-UCL"/>
</dbReference>
<dbReference type="GO" id="GO:0005654">
    <property type="term" value="C:nucleoplasm"/>
    <property type="evidence" value="ECO:0007669"/>
    <property type="project" value="Ensembl"/>
</dbReference>
<dbReference type="GO" id="GO:0045211">
    <property type="term" value="C:postsynaptic membrane"/>
    <property type="evidence" value="ECO:0007669"/>
    <property type="project" value="Ensembl"/>
</dbReference>
<dbReference type="GO" id="GO:0002116">
    <property type="term" value="C:semaphorin receptor complex"/>
    <property type="evidence" value="ECO:0000315"/>
    <property type="project" value="BHF-UCL"/>
</dbReference>
<dbReference type="GO" id="GO:0048018">
    <property type="term" value="F:receptor ligand activity"/>
    <property type="evidence" value="ECO:0000314"/>
    <property type="project" value="BHF-UCL"/>
</dbReference>
<dbReference type="GO" id="GO:0030215">
    <property type="term" value="F:semaphorin receptor binding"/>
    <property type="evidence" value="ECO:0000353"/>
    <property type="project" value="BHF-UCL"/>
</dbReference>
<dbReference type="GO" id="GO:0005102">
    <property type="term" value="F:signaling receptor binding"/>
    <property type="evidence" value="ECO:0000353"/>
    <property type="project" value="MGI"/>
</dbReference>
<dbReference type="GO" id="GO:0004888">
    <property type="term" value="F:transmembrane signaling receptor activity"/>
    <property type="evidence" value="ECO:0000250"/>
    <property type="project" value="UniProtKB"/>
</dbReference>
<dbReference type="GO" id="GO:0007409">
    <property type="term" value="P:axonogenesis"/>
    <property type="evidence" value="ECO:0000314"/>
    <property type="project" value="MGI"/>
</dbReference>
<dbReference type="GO" id="GO:0061430">
    <property type="term" value="P:bone trabecula morphogenesis"/>
    <property type="evidence" value="ECO:0000315"/>
    <property type="project" value="BHF-UCL"/>
</dbReference>
<dbReference type="GO" id="GO:0070486">
    <property type="term" value="P:leukocyte aggregation"/>
    <property type="evidence" value="ECO:0000250"/>
    <property type="project" value="UniProtKB"/>
</dbReference>
<dbReference type="GO" id="GO:0007162">
    <property type="term" value="P:negative regulation of cell adhesion"/>
    <property type="evidence" value="ECO:0000250"/>
    <property type="project" value="UniProtKB"/>
</dbReference>
<dbReference type="GO" id="GO:0045668">
    <property type="term" value="P:negative regulation of osteoblast differentiation"/>
    <property type="evidence" value="ECO:0000315"/>
    <property type="project" value="BHF-UCL"/>
</dbReference>
<dbReference type="GO" id="GO:0000122">
    <property type="term" value="P:negative regulation of transcription by RNA polymerase II"/>
    <property type="evidence" value="ECO:0000314"/>
    <property type="project" value="BHF-UCL"/>
</dbReference>
<dbReference type="GO" id="GO:0043931">
    <property type="term" value="P:ossification involved in bone maturation"/>
    <property type="evidence" value="ECO:0000315"/>
    <property type="project" value="BHF-UCL"/>
</dbReference>
<dbReference type="GO" id="GO:0050772">
    <property type="term" value="P:positive regulation of axonogenesis"/>
    <property type="evidence" value="ECO:0000314"/>
    <property type="project" value="MGI"/>
</dbReference>
<dbReference type="GO" id="GO:0030335">
    <property type="term" value="P:positive regulation of cell migration"/>
    <property type="evidence" value="ECO:0000314"/>
    <property type="project" value="BHF-UCL"/>
</dbReference>
<dbReference type="GO" id="GO:0048672">
    <property type="term" value="P:positive regulation of collateral sprouting"/>
    <property type="evidence" value="ECO:0000250"/>
    <property type="project" value="UniProtKB"/>
</dbReference>
<dbReference type="GO" id="GO:1905704">
    <property type="term" value="P:positive regulation of inhibitory synapse assembly"/>
    <property type="evidence" value="ECO:0000314"/>
    <property type="project" value="UniProtKB"/>
</dbReference>
<dbReference type="GO" id="GO:0051897">
    <property type="term" value="P:positive regulation of phosphatidylinositol 3-kinase/protein kinase B signal transduction"/>
    <property type="evidence" value="ECO:0000250"/>
    <property type="project" value="UniProtKB"/>
</dbReference>
<dbReference type="GO" id="GO:0001934">
    <property type="term" value="P:positive regulation of protein phosphorylation"/>
    <property type="evidence" value="ECO:0000250"/>
    <property type="project" value="UniProtKB"/>
</dbReference>
<dbReference type="GO" id="GO:0035025">
    <property type="term" value="P:positive regulation of Rho protein signal transduction"/>
    <property type="evidence" value="ECO:0000315"/>
    <property type="project" value="BHF-UCL"/>
</dbReference>
<dbReference type="GO" id="GO:0031344">
    <property type="term" value="P:regulation of cell projection organization"/>
    <property type="evidence" value="ECO:0000250"/>
    <property type="project" value="UniProtKB"/>
</dbReference>
<dbReference type="GO" id="GO:0008360">
    <property type="term" value="P:regulation of cell shape"/>
    <property type="evidence" value="ECO:0000250"/>
    <property type="project" value="UniProtKB"/>
</dbReference>
<dbReference type="GO" id="GO:0048814">
    <property type="term" value="P:regulation of dendrite morphogenesis"/>
    <property type="evidence" value="ECO:0000250"/>
    <property type="project" value="UniProtKB"/>
</dbReference>
<dbReference type="GO" id="GO:0051963">
    <property type="term" value="P:regulation of synapse assembly"/>
    <property type="evidence" value="ECO:0000314"/>
    <property type="project" value="SynGO"/>
</dbReference>
<dbReference type="GO" id="GO:0071526">
    <property type="term" value="P:semaphorin-plexin signaling pathway"/>
    <property type="evidence" value="ECO:0000315"/>
    <property type="project" value="BHF-UCL"/>
</dbReference>
<dbReference type="CDD" id="cd11259">
    <property type="entry name" value="Sema_4D"/>
    <property type="match status" value="1"/>
</dbReference>
<dbReference type="FunFam" id="2.130.10.10:FF:000120">
    <property type="entry name" value="Semaphorin 4D"/>
    <property type="match status" value="1"/>
</dbReference>
<dbReference type="FunFam" id="3.30.1680.10:FF:000013">
    <property type="entry name" value="Semaphorin 4D"/>
    <property type="match status" value="1"/>
</dbReference>
<dbReference type="FunFam" id="2.60.40.10:FF:000647">
    <property type="entry name" value="Semaphorin-4D"/>
    <property type="match status" value="1"/>
</dbReference>
<dbReference type="Gene3D" id="2.60.40.10">
    <property type="entry name" value="Immunoglobulins"/>
    <property type="match status" value="1"/>
</dbReference>
<dbReference type="Gene3D" id="3.30.1680.10">
    <property type="entry name" value="ligand-binding face of the semaphorins, domain 2"/>
    <property type="match status" value="1"/>
</dbReference>
<dbReference type="Gene3D" id="2.130.10.10">
    <property type="entry name" value="YVTN repeat-like/Quinoprotein amine dehydrogenase"/>
    <property type="match status" value="1"/>
</dbReference>
<dbReference type="InterPro" id="IPR007110">
    <property type="entry name" value="Ig-like_dom"/>
</dbReference>
<dbReference type="InterPro" id="IPR036179">
    <property type="entry name" value="Ig-like_dom_sf"/>
</dbReference>
<dbReference type="InterPro" id="IPR013783">
    <property type="entry name" value="Ig-like_fold"/>
</dbReference>
<dbReference type="InterPro" id="IPR003598">
    <property type="entry name" value="Ig_sub2"/>
</dbReference>
<dbReference type="InterPro" id="IPR013151">
    <property type="entry name" value="Immunoglobulin_dom"/>
</dbReference>
<dbReference type="InterPro" id="IPR002165">
    <property type="entry name" value="Plexin_repeat"/>
</dbReference>
<dbReference type="InterPro" id="IPR016201">
    <property type="entry name" value="PSI"/>
</dbReference>
<dbReference type="InterPro" id="IPR001627">
    <property type="entry name" value="Semap_dom"/>
</dbReference>
<dbReference type="InterPro" id="IPR036352">
    <property type="entry name" value="Semap_dom_sf"/>
</dbReference>
<dbReference type="InterPro" id="IPR027231">
    <property type="entry name" value="Semaphorin"/>
</dbReference>
<dbReference type="InterPro" id="IPR015943">
    <property type="entry name" value="WD40/YVTN_repeat-like_dom_sf"/>
</dbReference>
<dbReference type="PANTHER" id="PTHR11036">
    <property type="entry name" value="SEMAPHORIN"/>
    <property type="match status" value="1"/>
</dbReference>
<dbReference type="PANTHER" id="PTHR11036:SF18">
    <property type="entry name" value="SEMAPHORIN-4D"/>
    <property type="match status" value="1"/>
</dbReference>
<dbReference type="Pfam" id="PF00047">
    <property type="entry name" value="ig"/>
    <property type="match status" value="1"/>
</dbReference>
<dbReference type="Pfam" id="PF01437">
    <property type="entry name" value="PSI"/>
    <property type="match status" value="1"/>
</dbReference>
<dbReference type="Pfam" id="PF01403">
    <property type="entry name" value="Sema"/>
    <property type="match status" value="1"/>
</dbReference>
<dbReference type="SMART" id="SM00408">
    <property type="entry name" value="IGc2"/>
    <property type="match status" value="1"/>
</dbReference>
<dbReference type="SMART" id="SM00423">
    <property type="entry name" value="PSI"/>
    <property type="match status" value="1"/>
</dbReference>
<dbReference type="SMART" id="SM00630">
    <property type="entry name" value="Sema"/>
    <property type="match status" value="1"/>
</dbReference>
<dbReference type="SUPFAM" id="SSF48726">
    <property type="entry name" value="Immunoglobulin"/>
    <property type="match status" value="1"/>
</dbReference>
<dbReference type="SUPFAM" id="SSF103575">
    <property type="entry name" value="Plexin repeat"/>
    <property type="match status" value="1"/>
</dbReference>
<dbReference type="SUPFAM" id="SSF101912">
    <property type="entry name" value="Sema domain"/>
    <property type="match status" value="1"/>
</dbReference>
<dbReference type="PROSITE" id="PS50835">
    <property type="entry name" value="IG_LIKE"/>
    <property type="match status" value="1"/>
</dbReference>
<dbReference type="PROSITE" id="PS51004">
    <property type="entry name" value="SEMA"/>
    <property type="match status" value="1"/>
</dbReference>
<sequence length="861" mass="95640">MRMCAPVRGLFLALVVVLRTAVAFAPVPRLTWEHGEVGLVQFHKPGIFNYSALLMSEDKDTLYVGAREAVFAVNALNISEKQHEVYWKVSEDKKSKCAEKGKSKQTECLNYIRVLQPLSSTSLYVCGTNAFQPTCDHLNLTSFKFLGKSEDGKGRCPFDPAHSYTSVMVGGELYSGTSYNFLGSEPIISRNSSHSPLRTEYAIPWLNEPSFVFADVIQKSPDGPEGEDDKVYFFFTEVSVEYEFVFKLMIPRVARVCKGDQGGLRTLQKKWTSFLKARLICSKPDSGLVFNILQDVFVLRAPGLKEPVFYAVFTPQLNNVGLSAVCAYTLATVEAVFSRGKYMQSATVEQSHTKWVRYNGPVPTPRPGACIDSEARAANYTSSLNLPDKTLQFVKDHPLMDDSVTPIDNRPKLIKKDVNYTQIVVDRTQALDGTFYDVMFISTDRGALHKAVILTKEVHVIEETQLFRDSEPVLTLLLSSKKGRKFVYAGSNSGVVQAPLAFCEKHGSCEDCVLARDPYCAWSPAIKACVTLHQEEASSRGWIQDMSGDTSSCLDKSKESFNQHFFKHGGTAELKCFQKSNLARVVWKFQNGELKAASPKYGFVGRKHLLIFNLSDGDSGVYQCLSEERVRNKTVSQLLAKHVLEVKMVPRTPPSPTSEDAQTEGSKITSKMPVASTQGSSPPTPALWATSPRAATLPPKSSSGTSCEPKMVINTVPQLHSEKTVYLKSSDNRLLMSLLLFIFVLFLCLFSYNCYKGYLPGQCLKFRSALLLGKKTPKSDFSDLEQSVKETLVEPGSFSQQNGDHPKPALDTGYETEQDTITSKVPTDREDSQRIDELSARDKPFDVKCELKFADSDADGD</sequence>
<evidence type="ECO:0000250" key="1"/>
<evidence type="ECO:0000250" key="2">
    <source>
        <dbReference type="UniProtKB" id="Q92854"/>
    </source>
</evidence>
<evidence type="ECO:0000255" key="3"/>
<evidence type="ECO:0000255" key="4">
    <source>
        <dbReference type="PROSITE-ProRule" id="PRU00352"/>
    </source>
</evidence>
<evidence type="ECO:0000256" key="5">
    <source>
        <dbReference type="SAM" id="MobiDB-lite"/>
    </source>
</evidence>
<evidence type="ECO:0000269" key="6">
    <source>
    </source>
</evidence>
<evidence type="ECO:0000269" key="7">
    <source>
    </source>
</evidence>
<evidence type="ECO:0000269" key="8">
    <source>
    </source>
</evidence>
<evidence type="ECO:0000269" key="9">
    <source>
    </source>
</evidence>
<evidence type="ECO:0000269" key="10">
    <source>
    </source>
</evidence>
<evidence type="ECO:0000305" key="11"/>
<evidence type="ECO:0007744" key="12">
    <source>
    </source>
</evidence>
<protein>
    <recommendedName>
        <fullName>Semaphorin-4D</fullName>
    </recommendedName>
    <alternativeName>
        <fullName>M-Sema G</fullName>
    </alternativeName>
    <alternativeName>
        <fullName>Semaphorin-C-like 2</fullName>
    </alternativeName>
    <alternativeName>
        <fullName>Semaphorin-J</fullName>
        <shortName>Sema J</shortName>
    </alternativeName>
    <cdAntigenName>CD100</cdAntigenName>
</protein>
<comment type="function">
    <text evidence="2 6 8 9">Cell surface receptor for PLXNB1 and PLXNB2 that plays an important role in cell-cell signaling (By similarity). Regulates GABAergic synapse development (PubMed:23699507, PubMed:29981480). Promotes the development of inhibitory synapses in a PLXNB1-dependent manner (PubMed:23699507, PubMed:29981480). Modulates the complexity and arborization of developing neurites in hippocampal neurons by activating PLXNB1 and interaction with PLXNB1 mediates activation of RHOA (By similarity). Promotes the migration of cerebellar granule cells (PubMed:17554007). Plays a role in the immune system; induces B-cells to aggregate and improves their viability (in vitro) (By similarity). Induces endothelial cell migration through the activation of PTK2B/PYK2, SRC, and the phosphatidylinositol 3-kinase-AKT pathway (By similarity).</text>
</comment>
<comment type="subunit">
    <text evidence="2 6">Homodimer (By similarity). Interacts with PLXNB1 (By similarity). Interacts with PLXNB2 (PubMed:17554007).</text>
</comment>
<comment type="subcellular location">
    <subcellularLocation>
        <location evidence="10">Cell membrane</location>
        <topology evidence="3">Single-pass type I membrane protein</topology>
    </subcellularLocation>
</comment>
<comment type="tissue specificity">
    <text evidence="9 10">Strongly expressed in lymphoid tissues, especially in the thymus, as well as in the nervous tissues (PubMed:8969198). Expressed in neurons and glia in the developing hippocampus (PubMed:29981480).</text>
</comment>
<comment type="similarity">
    <text evidence="11">Belongs to the semaphorin family.</text>
</comment>
<feature type="signal peptide" evidence="3">
    <location>
        <begin position="1"/>
        <end position="23"/>
    </location>
</feature>
<feature type="chain" id="PRO_0000032328" description="Semaphorin-4D">
    <location>
        <begin position="24"/>
        <end position="861"/>
    </location>
</feature>
<feature type="topological domain" description="Extracellular" evidence="3">
    <location>
        <begin position="24"/>
        <end position="733"/>
    </location>
</feature>
<feature type="transmembrane region" description="Helical" evidence="3">
    <location>
        <begin position="734"/>
        <end position="754"/>
    </location>
</feature>
<feature type="topological domain" description="Cytoplasmic" evidence="3">
    <location>
        <begin position="755"/>
        <end position="861"/>
    </location>
</feature>
<feature type="domain" description="Sema" evidence="4">
    <location>
        <begin position="24"/>
        <end position="500"/>
    </location>
</feature>
<feature type="domain" description="PSI">
    <location>
        <begin position="502"/>
        <end position="551"/>
    </location>
</feature>
<feature type="domain" description="Ig-like C2-type">
    <location>
        <begin position="555"/>
        <end position="636"/>
    </location>
</feature>
<feature type="region of interest" description="Disordered" evidence="5">
    <location>
        <begin position="649"/>
        <end position="709"/>
    </location>
</feature>
<feature type="region of interest" description="Disordered" evidence="5">
    <location>
        <begin position="793"/>
        <end position="839"/>
    </location>
</feature>
<feature type="compositionally biased region" description="Polar residues" evidence="5">
    <location>
        <begin position="657"/>
        <end position="681"/>
    </location>
</feature>
<feature type="compositionally biased region" description="Basic and acidic residues" evidence="5">
    <location>
        <begin position="826"/>
        <end position="839"/>
    </location>
</feature>
<feature type="modified residue" description="Phosphoserine" evidence="12">
    <location>
        <position position="782"/>
    </location>
</feature>
<feature type="modified residue" description="Phosphoserine" evidence="2">
    <location>
        <position position="832"/>
    </location>
</feature>
<feature type="glycosylation site" description="N-linked (GlcNAc...) asparagine" evidence="3">
    <location>
        <position position="49"/>
    </location>
</feature>
<feature type="glycosylation site" description="N-linked (GlcNAc...) asparagine" evidence="7">
    <location>
        <position position="77"/>
    </location>
</feature>
<feature type="glycosylation site" description="N-linked (GlcNAc...) asparagine" evidence="3">
    <location>
        <position position="139"/>
    </location>
</feature>
<feature type="glycosylation site" description="N-linked (GlcNAc...) asparagine" evidence="3">
    <location>
        <position position="191"/>
    </location>
</feature>
<feature type="glycosylation site" description="N-linked (GlcNAc...) asparagine" evidence="7">
    <location>
        <position position="379"/>
    </location>
</feature>
<feature type="glycosylation site" description="N-linked (GlcNAc...) asparagine" evidence="7">
    <location>
        <position position="419"/>
    </location>
</feature>
<feature type="glycosylation site" description="N-linked (GlcNAc...) asparagine" evidence="3">
    <location>
        <position position="613"/>
    </location>
</feature>
<feature type="glycosylation site" description="N-linked (GlcNAc...) asparagine" evidence="3">
    <location>
        <position position="632"/>
    </location>
</feature>
<feature type="disulfide bond" evidence="1">
    <location>
        <begin position="97"/>
        <end position="108"/>
    </location>
</feature>
<feature type="disulfide bond" evidence="1">
    <location>
        <begin position="126"/>
        <end position="135"/>
    </location>
</feature>
<feature type="disulfide bond" evidence="1">
    <location>
        <begin position="257"/>
        <end position="370"/>
    </location>
</feature>
<feature type="disulfide bond" evidence="1">
    <location>
        <begin position="281"/>
        <end position="326"/>
    </location>
</feature>
<feature type="disulfide bond" evidence="1">
    <location>
        <begin position="503"/>
        <end position="520"/>
    </location>
</feature>
<feature type="disulfide bond" evidence="1">
    <location>
        <begin position="509"/>
        <end position="553"/>
    </location>
</feature>
<feature type="disulfide bond" evidence="1">
    <location>
        <begin position="512"/>
        <end position="529"/>
    </location>
</feature>
<feature type="disulfide bond" evidence="1">
    <location>
        <begin position="576"/>
        <end position="624"/>
    </location>
</feature>
<feature type="sequence conflict" description="In Ref. 1; AAC52964." evidence="11" ref="1">
    <original>S</original>
    <variation>F</variation>
    <location>
        <position position="470"/>
    </location>
</feature>
<feature type="sequence conflict" description="In Ref. 1; AAC52964." evidence="11" ref="1">
    <original>A</original>
    <variation>V</variation>
    <location>
        <position position="661"/>
    </location>
</feature>
<feature type="sequence conflict" description="In Ref. 1; AAC52964." evidence="11" ref="1">
    <original>A</original>
    <variation>G</variation>
    <location>
        <position position="675"/>
    </location>
</feature>
<accession>O09126</accession>
<accession>Q6GTM9</accession>
<organism>
    <name type="scientific">Mus musculus</name>
    <name type="common">Mouse</name>
    <dbReference type="NCBI Taxonomy" id="10090"/>
    <lineage>
        <taxon>Eukaryota</taxon>
        <taxon>Metazoa</taxon>
        <taxon>Chordata</taxon>
        <taxon>Craniata</taxon>
        <taxon>Vertebrata</taxon>
        <taxon>Euteleostomi</taxon>
        <taxon>Mammalia</taxon>
        <taxon>Eutheria</taxon>
        <taxon>Euarchontoglires</taxon>
        <taxon>Glires</taxon>
        <taxon>Rodentia</taxon>
        <taxon>Myomorpha</taxon>
        <taxon>Muroidea</taxon>
        <taxon>Muridae</taxon>
        <taxon>Murinae</taxon>
        <taxon>Mus</taxon>
        <taxon>Mus</taxon>
    </lineage>
</organism>
<reference key="1">
    <citation type="journal article" date="1996" name="J. Biol. Chem.">
        <title>Identification of a novel transmembrane semaphorin expressed on lymphocytes.</title>
        <authorList>
            <person name="Furuyama T."/>
            <person name="Inagaki S."/>
            <person name="Kosugi A."/>
            <person name="Noda S."/>
            <person name="Saitoh S."/>
            <person name="Ogata M."/>
            <person name="Iwahashi Y."/>
            <person name="Miyazaki N."/>
            <person name="Hamaoka T."/>
            <person name="Tohyama M."/>
        </authorList>
    </citation>
    <scope>NUCLEOTIDE SEQUENCE [MRNA]</scope>
    <scope>SUBCELLULAR LOCATION</scope>
    <scope>TISSUE SPECIFICITY</scope>
    <source>
        <strain>C57BL/6J</strain>
        <tissue>Brain</tissue>
    </source>
</reference>
<reference key="2">
    <citation type="submission" date="2005-07" db="EMBL/GenBank/DDBJ databases">
        <authorList>
            <person name="Mural R.J."/>
            <person name="Adams M.D."/>
            <person name="Myers E.W."/>
            <person name="Smith H.O."/>
            <person name="Venter J.C."/>
        </authorList>
    </citation>
    <scope>NUCLEOTIDE SEQUENCE [LARGE SCALE GENOMIC DNA]</scope>
</reference>
<reference key="3">
    <citation type="journal article" date="2004" name="Genome Res.">
        <title>The status, quality, and expansion of the NIH full-length cDNA project: the Mammalian Gene Collection (MGC).</title>
        <authorList>
            <consortium name="The MGC Project Team"/>
        </authorList>
    </citation>
    <scope>NUCLEOTIDE SEQUENCE [LARGE SCALE MRNA]</scope>
    <source>
        <tissue>Limb</tissue>
    </source>
</reference>
<reference key="4">
    <citation type="journal article" date="2007" name="J. Neurosci.">
        <title>Plexin-B2, but not Plexin-B1, critically modulates neuronal migration and patterning of the developing nervous system in vivo.</title>
        <authorList>
            <person name="Deng S."/>
            <person name="Hirschberg A."/>
            <person name="Worzfeld T."/>
            <person name="Penachioni J.Y."/>
            <person name="Korostylev A."/>
            <person name="Swiercz J.M."/>
            <person name="Vodrazka P."/>
            <person name="Mauti O."/>
            <person name="Stoeckli E.T."/>
            <person name="Tamagnone L."/>
            <person name="Offermanns S."/>
            <person name="Kuner R."/>
        </authorList>
    </citation>
    <scope>FUNCTION</scope>
    <scope>INTERACTION WITH PLXNB2</scope>
</reference>
<reference key="5">
    <citation type="journal article" date="2009" name="Nat. Biotechnol.">
        <title>Mass-spectrometric identification and relative quantification of N-linked cell surface glycoproteins.</title>
        <authorList>
            <person name="Wollscheid B."/>
            <person name="Bausch-Fluck D."/>
            <person name="Henderson C."/>
            <person name="O'Brien R."/>
            <person name="Bibel M."/>
            <person name="Schiess R."/>
            <person name="Aebersold R."/>
            <person name="Watts J.D."/>
        </authorList>
    </citation>
    <scope>GLYCOSYLATION [LARGE SCALE ANALYSIS] AT ASN-77; ASN-379 AND ASN-419</scope>
</reference>
<reference key="6">
    <citation type="journal article" date="2010" name="Cell">
        <title>A tissue-specific atlas of mouse protein phosphorylation and expression.</title>
        <authorList>
            <person name="Huttlin E.L."/>
            <person name="Jedrychowski M.P."/>
            <person name="Elias J.E."/>
            <person name="Goswami T."/>
            <person name="Rad R."/>
            <person name="Beausoleil S.A."/>
            <person name="Villen J."/>
            <person name="Haas W."/>
            <person name="Sowa M.E."/>
            <person name="Gygi S.P."/>
        </authorList>
    </citation>
    <scope>PHOSPHORYLATION [LARGE SCALE ANALYSIS] AT SER-782</scope>
    <scope>IDENTIFICATION BY MASS SPECTROMETRY [LARGE SCALE ANALYSIS]</scope>
    <source>
        <tissue>Brain</tissue>
        <tissue>Kidney</tissue>
        <tissue>Spleen</tissue>
    </source>
</reference>
<reference key="7">
    <citation type="journal article" date="2013" name="J. Neurosci.">
        <title>The class 4 semaphorin Sema4D promotes the rapid assembly of GABAergic synapses in rodent hippocampus.</title>
        <authorList>
            <person name="Kuzirian M.S."/>
            <person name="Moore A.R."/>
            <person name="Staudenmaier E.K."/>
            <person name="Friedel R.H."/>
            <person name="Paradis S."/>
        </authorList>
    </citation>
    <scope>FUNCTION</scope>
</reference>
<reference key="8">
    <citation type="journal article" date="2018" name="Mol. Cell. Neurosci.">
        <title>Class 4 Semaphorins and Plexin-B receptors regulate GABAergic and glutamatergic synapse development in the mammalian hippocampus.</title>
        <authorList>
            <person name="McDermott J.E."/>
            <person name="Goldblatt D."/>
            <person name="Paradis S."/>
        </authorList>
    </citation>
    <scope>FUNCTION</scope>
    <scope>TISSUE SPECIFICITY</scope>
</reference>
<gene>
    <name type="primary">Sema4d</name>
    <name type="synonym">Semacl2</name>
    <name type="synonym">Semaj</name>
</gene>